<feature type="chain" id="PRO_0000329031" description="Mitochondrial basic amino acids transporter">
    <location>
        <begin position="1"/>
        <end position="306"/>
    </location>
</feature>
<feature type="transmembrane region" description="Helical; Name=1" evidence="3">
    <location>
        <begin position="2"/>
        <end position="22"/>
    </location>
</feature>
<feature type="transmembrane region" description="Helical; Name=2" evidence="3">
    <location>
        <begin position="61"/>
        <end position="81"/>
    </location>
</feature>
<feature type="transmembrane region" description="Helical; Name=3" evidence="3">
    <location>
        <begin position="96"/>
        <end position="116"/>
    </location>
</feature>
<feature type="transmembrane region" description="Helical; Name=4" evidence="3">
    <location>
        <begin position="153"/>
        <end position="172"/>
    </location>
</feature>
<feature type="transmembrane region" description="Helical; Name=5" evidence="3">
    <location>
        <begin position="187"/>
        <end position="207"/>
    </location>
</feature>
<feature type="transmembrane region" description="Helical; Name=6" evidence="3">
    <location>
        <begin position="255"/>
        <end position="275"/>
    </location>
</feature>
<feature type="repeat" description="Solcar 1">
    <location>
        <begin position="2"/>
        <end position="86"/>
    </location>
</feature>
<feature type="repeat" description="Solcar 2">
    <location>
        <begin position="90"/>
        <end position="178"/>
    </location>
</feature>
<feature type="repeat" description="Solcar 3">
    <location>
        <begin position="190"/>
        <end position="275"/>
    </location>
</feature>
<feature type="region of interest" description="Disordered" evidence="4">
    <location>
        <begin position="283"/>
        <end position="306"/>
    </location>
</feature>
<feature type="compositionally biased region" description="Low complexity" evidence="4">
    <location>
        <begin position="287"/>
        <end position="306"/>
    </location>
</feature>
<organism>
    <name type="scientific">Rattus norvegicus</name>
    <name type="common">Rat</name>
    <dbReference type="NCBI Taxonomy" id="10116"/>
    <lineage>
        <taxon>Eukaryota</taxon>
        <taxon>Metazoa</taxon>
        <taxon>Chordata</taxon>
        <taxon>Craniata</taxon>
        <taxon>Vertebrata</taxon>
        <taxon>Euteleostomi</taxon>
        <taxon>Mammalia</taxon>
        <taxon>Eutheria</taxon>
        <taxon>Euarchontoglires</taxon>
        <taxon>Glires</taxon>
        <taxon>Rodentia</taxon>
        <taxon>Myomorpha</taxon>
        <taxon>Muroidea</taxon>
        <taxon>Muridae</taxon>
        <taxon>Murinae</taxon>
        <taxon>Rattus</taxon>
    </lineage>
</organism>
<accession>Q5HZE0</accession>
<name>S2529_RAT</name>
<keyword id="KW-0029">Amino-acid transport</keyword>
<keyword id="KW-0472">Membrane</keyword>
<keyword id="KW-0496">Mitochondrion</keyword>
<keyword id="KW-0999">Mitochondrion inner membrane</keyword>
<keyword id="KW-1185">Reference proteome</keyword>
<keyword id="KW-0677">Repeat</keyword>
<keyword id="KW-0812">Transmembrane</keyword>
<keyword id="KW-1133">Transmembrane helix</keyword>
<keyword id="KW-0813">Transport</keyword>
<gene>
    <name type="primary">Slc25a29</name>
    <name type="synonym">Ornt3</name>
</gene>
<protein>
    <recommendedName>
        <fullName>Mitochondrial basic amino acids transporter</fullName>
    </recommendedName>
    <alternativeName>
        <fullName evidence="1">Carnitine/acylcarnitine translocase-like</fullName>
        <shortName evidence="1">CACT-like</shortName>
    </alternativeName>
    <alternativeName>
        <fullName>Mitochondrial carnitine/acylcarnitine carrier protein CACL</fullName>
    </alternativeName>
    <alternativeName>
        <fullName evidence="2">Mitochondrial ornithine transporter 3</fullName>
    </alternativeName>
    <alternativeName>
        <fullName>Solute carrier family 25 member 29</fullName>
    </alternativeName>
</protein>
<reference key="1">
    <citation type="journal article" date="2004" name="Genome Res.">
        <title>The status, quality, and expansion of the NIH full-length cDNA project: the Mammalian Gene Collection (MGC).</title>
        <authorList>
            <consortium name="The MGC Project Team"/>
        </authorList>
    </citation>
    <scope>NUCLEOTIDE SEQUENCE [LARGE SCALE MRNA]</scope>
    <source>
        <tissue>Brain</tissue>
    </source>
</reference>
<evidence type="ECO:0000250" key="1">
    <source>
        <dbReference type="UniProtKB" id="Q8BL03"/>
    </source>
</evidence>
<evidence type="ECO:0000250" key="2">
    <source>
        <dbReference type="UniProtKB" id="Q8N8R3"/>
    </source>
</evidence>
<evidence type="ECO:0000255" key="3"/>
<evidence type="ECO:0000256" key="4">
    <source>
        <dbReference type="SAM" id="MobiDB-lite"/>
    </source>
</evidence>
<evidence type="ECO:0000305" key="5"/>
<proteinExistence type="evidence at transcript level"/>
<comment type="function">
    <text evidence="2">Mitochondrial transporter of arginine, lysine, homoarginine, methylarginine and, to a much lesser extent, ornithine and histidine. Does not transport carnitine nor acylcarnitines. Functions by both counter-exchange and uniport mechanisms. Plays a physiological role in the import of basic amino acids into mitochondria for mitochondrial protein synthesis and amino acid degradation.</text>
</comment>
<comment type="catalytic activity">
    <reaction evidence="2">
        <text>L-lysine(out) + L-arginine(in) = L-lysine(in) + L-arginine(out)</text>
        <dbReference type="Rhea" id="RHEA:70827"/>
        <dbReference type="ChEBI" id="CHEBI:32551"/>
        <dbReference type="ChEBI" id="CHEBI:32682"/>
    </reaction>
</comment>
<comment type="catalytic activity">
    <reaction evidence="2">
        <text>L-histidine(out) + L-arginine(in) = L-histidine(in) + L-arginine(out)</text>
        <dbReference type="Rhea" id="RHEA:71063"/>
        <dbReference type="ChEBI" id="CHEBI:32682"/>
        <dbReference type="ChEBI" id="CHEBI:57595"/>
    </reaction>
</comment>
<comment type="catalytic activity">
    <reaction evidence="2">
        <text>L-ornithine(in) + L-arginine(out) = L-ornithine(out) + L-arginine(in)</text>
        <dbReference type="Rhea" id="RHEA:34991"/>
        <dbReference type="ChEBI" id="CHEBI:32682"/>
        <dbReference type="ChEBI" id="CHEBI:46911"/>
    </reaction>
</comment>
<comment type="catalytic activity">
    <reaction evidence="2">
        <text>L-homoarginine(in) + L-arginine(out) = L-homoarginine(out) + L-arginine(in)</text>
        <dbReference type="Rhea" id="RHEA:72799"/>
        <dbReference type="ChEBI" id="CHEBI:32682"/>
        <dbReference type="ChEBI" id="CHEBI:143006"/>
    </reaction>
</comment>
<comment type="catalytic activity">
    <reaction evidence="2">
        <text>N(omega)-methyl-L-arginine(in) + L-arginine(out) = N(omega)-methyl-L-arginine(out) + L-arginine(in)</text>
        <dbReference type="Rhea" id="RHEA:72803"/>
        <dbReference type="ChEBI" id="CHEBI:32682"/>
        <dbReference type="ChEBI" id="CHEBI:114953"/>
    </reaction>
</comment>
<comment type="catalytic activity">
    <reaction evidence="2">
        <text>L-arginine(in) = L-arginine(out)</text>
        <dbReference type="Rhea" id="RHEA:32143"/>
        <dbReference type="ChEBI" id="CHEBI:32682"/>
    </reaction>
</comment>
<comment type="catalytic activity">
    <reaction evidence="2">
        <text>L-lysine(in) = L-lysine(out)</text>
        <dbReference type="Rhea" id="RHEA:70935"/>
        <dbReference type="ChEBI" id="CHEBI:32551"/>
    </reaction>
</comment>
<comment type="catalytic activity">
    <reaction evidence="2">
        <text>L-ornithine(in) = L-ornithine(out)</text>
        <dbReference type="Rhea" id="RHEA:71199"/>
        <dbReference type="ChEBI" id="CHEBI:46911"/>
    </reaction>
</comment>
<comment type="catalytic activity">
    <reaction evidence="2">
        <text>L-histidine(out) = L-histidine(in)</text>
        <dbReference type="Rhea" id="RHEA:72807"/>
        <dbReference type="ChEBI" id="CHEBI:57595"/>
    </reaction>
</comment>
<comment type="subcellular location">
    <subcellularLocation>
        <location evidence="1">Mitochondrion inner membrane</location>
        <topology evidence="3">Multi-pass membrane protein</topology>
    </subcellularLocation>
</comment>
<comment type="similarity">
    <text evidence="5">Belongs to the mitochondrial carrier (TC 2.A.29) family.</text>
</comment>
<comment type="caution">
    <text evidence="1 2">Initially, this protein was identified as a carnitine/acylcarnitine transporter (By similarity). Later, a study conducted by Palmieri and coworkers demonstrated that SLC25A29 is mainly involved in the translocation of basic amino acids (By similarity).</text>
</comment>
<sequence>MALDFLAGCAGGVAGVIVGHPFDTVKVRLQVQNTEKPQYRGTLHCFQSIIKQESVLGLYKGLGSPLMGLTFINALVFGVQGNTLRALGQDSPLNQFLAGAAAGAIQCVICCPMELAKTRLQLQAAGPARAYKGSLDCLVQIYRHEGLRGINRGMVSTLLRETPSFGVYFLTYDVLTRAMGCEPGDRLLVPKLLLAGGTSGITSWLSTYPMDVVKSRLQADGLQGTPRYRGIVDCMRQSYQAEGWQVFTRGLASTLLRAFPVNAATFATVTVVLTYIRGEEDQVDSEAAPGASTTPAGPALAQPSSL</sequence>
<dbReference type="EMBL" id="BC089065">
    <property type="protein sequence ID" value="AAH89065.1"/>
    <property type="molecule type" value="mRNA"/>
</dbReference>
<dbReference type="RefSeq" id="NP_001010958.1">
    <property type="nucleotide sequence ID" value="NM_001010958.1"/>
</dbReference>
<dbReference type="SMR" id="Q5HZE0"/>
<dbReference type="FunCoup" id="Q5HZE0">
    <property type="interactions" value="167"/>
</dbReference>
<dbReference type="STRING" id="10116.ENSRNOP00000005753"/>
<dbReference type="PhosphoSitePlus" id="Q5HZE0"/>
<dbReference type="SwissPalm" id="Q5HZE0"/>
<dbReference type="PaxDb" id="10116-ENSRNOP00000005753"/>
<dbReference type="GeneID" id="314441"/>
<dbReference type="KEGG" id="rno:314441"/>
<dbReference type="UCSC" id="RGD:1308104">
    <property type="organism name" value="rat"/>
</dbReference>
<dbReference type="AGR" id="RGD:1308104"/>
<dbReference type="CTD" id="123096"/>
<dbReference type="RGD" id="1308104">
    <property type="gene designation" value="Slc25a29"/>
</dbReference>
<dbReference type="VEuPathDB" id="HostDB:ENSRNOG00000004351"/>
<dbReference type="eggNOG" id="KOG0762">
    <property type="taxonomic scope" value="Eukaryota"/>
</dbReference>
<dbReference type="HOGENOM" id="CLU_015166_16_1_1"/>
<dbReference type="InParanoid" id="Q5HZE0"/>
<dbReference type="OrthoDB" id="193856at2759"/>
<dbReference type="PhylomeDB" id="Q5HZE0"/>
<dbReference type="TreeFam" id="TF351739"/>
<dbReference type="Reactome" id="R-RNO-352230">
    <property type="pathway name" value="Amino acid transport across the plasma membrane"/>
</dbReference>
<dbReference type="PRO" id="PR:Q5HZE0"/>
<dbReference type="Proteomes" id="UP000002494">
    <property type="component" value="Chromosome 6"/>
</dbReference>
<dbReference type="Bgee" id="ENSRNOG00000004351">
    <property type="expression patterns" value="Expressed in pancreas and 19 other cell types or tissues"/>
</dbReference>
<dbReference type="GO" id="GO:0005743">
    <property type="term" value="C:mitochondrial inner membrane"/>
    <property type="evidence" value="ECO:0007669"/>
    <property type="project" value="UniProtKB-SubCell"/>
</dbReference>
<dbReference type="GO" id="GO:0005739">
    <property type="term" value="C:mitochondrion"/>
    <property type="evidence" value="ECO:0000250"/>
    <property type="project" value="UniProtKB"/>
</dbReference>
<dbReference type="GO" id="GO:0015174">
    <property type="term" value="F:basic amino acid transmembrane transporter activity"/>
    <property type="evidence" value="ECO:0000250"/>
    <property type="project" value="UniProtKB"/>
</dbReference>
<dbReference type="GO" id="GO:0005289">
    <property type="term" value="F:high-affinity L-arginine transmembrane transporter activity"/>
    <property type="evidence" value="ECO:0000250"/>
    <property type="project" value="UniProtKB"/>
</dbReference>
<dbReference type="GO" id="GO:0005292">
    <property type="term" value="F:high-affinity lysine transmembrane transporter activity"/>
    <property type="evidence" value="ECO:0000250"/>
    <property type="project" value="UniProtKB"/>
</dbReference>
<dbReference type="GO" id="GO:0015227">
    <property type="term" value="F:O-acyl-L-carnitine transmembrane transporter activity"/>
    <property type="evidence" value="ECO:0000266"/>
    <property type="project" value="RGD"/>
</dbReference>
<dbReference type="GO" id="GO:1903826">
    <property type="term" value="P:L-arginine transmembrane transport"/>
    <property type="evidence" value="ECO:0000250"/>
    <property type="project" value="UniProtKB"/>
</dbReference>
<dbReference type="GO" id="GO:0089709">
    <property type="term" value="P:L-histidine transmembrane transport"/>
    <property type="evidence" value="ECO:0000250"/>
    <property type="project" value="UniProtKB"/>
</dbReference>
<dbReference type="GO" id="GO:1903401">
    <property type="term" value="P:L-lysine transmembrane transport"/>
    <property type="evidence" value="ECO:0000250"/>
    <property type="project" value="UniProtKB"/>
</dbReference>
<dbReference type="GO" id="GO:1990575">
    <property type="term" value="P:mitochondrial L-ornithine transmembrane transport"/>
    <property type="evidence" value="ECO:0000250"/>
    <property type="project" value="UniProtKB"/>
</dbReference>
<dbReference type="GO" id="GO:0015822">
    <property type="term" value="P:ornithine transport"/>
    <property type="evidence" value="ECO:0000250"/>
    <property type="project" value="UniProtKB"/>
</dbReference>
<dbReference type="FunFam" id="1.50.40.10:FF:000037">
    <property type="entry name" value="Solute carrier family 25 member 29"/>
    <property type="match status" value="1"/>
</dbReference>
<dbReference type="Gene3D" id="1.50.40.10">
    <property type="entry name" value="Mitochondrial carrier domain"/>
    <property type="match status" value="1"/>
</dbReference>
<dbReference type="InterPro" id="IPR002067">
    <property type="entry name" value="Mit_carrier"/>
</dbReference>
<dbReference type="InterPro" id="IPR050567">
    <property type="entry name" value="Mitochondrial_Carrier"/>
</dbReference>
<dbReference type="InterPro" id="IPR018108">
    <property type="entry name" value="Mitochondrial_sb/sol_carrier"/>
</dbReference>
<dbReference type="InterPro" id="IPR023395">
    <property type="entry name" value="Mt_carrier_dom_sf"/>
</dbReference>
<dbReference type="PANTHER" id="PTHR45624:SF61">
    <property type="entry name" value="MITOCHONDRIAL BASIC AMINO ACIDS TRANSPORTER"/>
    <property type="match status" value="1"/>
</dbReference>
<dbReference type="PANTHER" id="PTHR45624">
    <property type="entry name" value="MITOCHONDRIAL BASIC AMINO ACIDS TRANSPORTER-RELATED"/>
    <property type="match status" value="1"/>
</dbReference>
<dbReference type="Pfam" id="PF00153">
    <property type="entry name" value="Mito_carr"/>
    <property type="match status" value="3"/>
</dbReference>
<dbReference type="PRINTS" id="PR00926">
    <property type="entry name" value="MITOCARRIER"/>
</dbReference>
<dbReference type="SUPFAM" id="SSF103506">
    <property type="entry name" value="Mitochondrial carrier"/>
    <property type="match status" value="1"/>
</dbReference>
<dbReference type="PROSITE" id="PS50920">
    <property type="entry name" value="SOLCAR"/>
    <property type="match status" value="3"/>
</dbReference>